<organism>
    <name type="scientific">Mycobacterium tuberculosis (strain CDC 1551 / Oshkosh)</name>
    <dbReference type="NCBI Taxonomy" id="83331"/>
    <lineage>
        <taxon>Bacteria</taxon>
        <taxon>Bacillati</taxon>
        <taxon>Actinomycetota</taxon>
        <taxon>Actinomycetes</taxon>
        <taxon>Mycobacteriales</taxon>
        <taxon>Mycobacteriaceae</taxon>
        <taxon>Mycobacterium</taxon>
        <taxon>Mycobacterium tuberculosis complex</taxon>
    </lineage>
</organism>
<name>Y2563_MYCTO</name>
<evidence type="ECO:0000255" key="1"/>
<evidence type="ECO:0000256" key="2">
    <source>
        <dbReference type="SAM" id="MobiDB-lite"/>
    </source>
</evidence>
<evidence type="ECO:0000305" key="3"/>
<dbReference type="EMBL" id="AE000516">
    <property type="protein sequence ID" value="AAK46952.1"/>
    <property type="molecule type" value="Genomic_DNA"/>
</dbReference>
<dbReference type="PIR" id="G70728">
    <property type="entry name" value="G70728"/>
</dbReference>
<dbReference type="RefSeq" id="WP_003413230.1">
    <property type="nucleotide sequence ID" value="NZ_KK341227.1"/>
</dbReference>
<dbReference type="SMR" id="P9WG14"/>
<dbReference type="KEGG" id="mtc:MT2639"/>
<dbReference type="PATRIC" id="fig|83331.31.peg.2846"/>
<dbReference type="HOGENOM" id="CLU_068246_0_0_11"/>
<dbReference type="Proteomes" id="UP000001020">
    <property type="component" value="Chromosome"/>
</dbReference>
<dbReference type="GO" id="GO:0005886">
    <property type="term" value="C:plasma membrane"/>
    <property type="evidence" value="ECO:0007669"/>
    <property type="project" value="UniProtKB-SubCell"/>
</dbReference>
<dbReference type="InterPro" id="IPR051125">
    <property type="entry name" value="ABC-4/HrtB_transporter"/>
</dbReference>
<dbReference type="InterPro" id="IPR003838">
    <property type="entry name" value="ABC3_permease_C"/>
</dbReference>
<dbReference type="InterPro" id="IPR025857">
    <property type="entry name" value="MacB_PCD"/>
</dbReference>
<dbReference type="PANTHER" id="PTHR43738">
    <property type="entry name" value="ABC TRANSPORTER, MEMBRANE PROTEIN"/>
    <property type="match status" value="1"/>
</dbReference>
<dbReference type="PANTHER" id="PTHR43738:SF1">
    <property type="entry name" value="HEMIN TRANSPORT SYSTEM PERMEASE PROTEIN HRTB-RELATED"/>
    <property type="match status" value="1"/>
</dbReference>
<dbReference type="Pfam" id="PF02687">
    <property type="entry name" value="FtsX"/>
    <property type="match status" value="1"/>
</dbReference>
<dbReference type="Pfam" id="PF12704">
    <property type="entry name" value="MacB_PCD"/>
    <property type="match status" value="1"/>
</dbReference>
<sequence length="349" mass="36025">MLFAALRDVQWRKRRLVIAIVSTGLVFAMTLVLTGLVNGFRVEAERTVDSMGVDAFVVKAGAAGPFLGSTPFAQIDLPQVARAPGVLAAAPLATAPSTIRQGTSARNVTAFGAPEHGPGMPRVSDGRAPSTPDEVAVSSTLGRNLGDDLQVGARTLRIVGIVPESTALAKIPNIFLTTEGLQQLAYNGQPTISSIGIDGMPRQLPDGYQTVNRADAVSDLMRPLKVAVDAITVVAVLLWIVAALIVGSVVYLSALERLRDFAVFKAIGVPTRSILAGLALQAVVVALLAAVVGGILSLLLAPLFPMTVVVPLSAFVALPAIATVIGLLASVAGLRRVVAIDPALAFGGP</sequence>
<comment type="subcellular location">
    <subcellularLocation>
        <location evidence="3">Cell membrane</location>
        <topology evidence="3">Multi-pass membrane protein</topology>
    </subcellularLocation>
</comment>
<comment type="similarity">
    <text evidence="3">Belongs to the ABC-4 integral membrane protein family.</text>
</comment>
<reference key="1">
    <citation type="journal article" date="2002" name="J. Bacteriol.">
        <title>Whole-genome comparison of Mycobacterium tuberculosis clinical and laboratory strains.</title>
        <authorList>
            <person name="Fleischmann R.D."/>
            <person name="Alland D."/>
            <person name="Eisen J.A."/>
            <person name="Carpenter L."/>
            <person name="White O."/>
            <person name="Peterson J.D."/>
            <person name="DeBoy R.T."/>
            <person name="Dodson R.J."/>
            <person name="Gwinn M.L."/>
            <person name="Haft D.H."/>
            <person name="Hickey E.K."/>
            <person name="Kolonay J.F."/>
            <person name="Nelson W.C."/>
            <person name="Umayam L.A."/>
            <person name="Ermolaeva M.D."/>
            <person name="Salzberg S.L."/>
            <person name="Delcher A."/>
            <person name="Utterback T.R."/>
            <person name="Weidman J.F."/>
            <person name="Khouri H.M."/>
            <person name="Gill J."/>
            <person name="Mikula A."/>
            <person name="Bishai W."/>
            <person name="Jacobs W.R. Jr."/>
            <person name="Venter J.C."/>
            <person name="Fraser C.M."/>
        </authorList>
    </citation>
    <scope>NUCLEOTIDE SEQUENCE [LARGE SCALE GENOMIC DNA]</scope>
    <source>
        <strain>CDC 1551 / Oshkosh</strain>
    </source>
</reference>
<proteinExistence type="inferred from homology"/>
<feature type="chain" id="PRO_0000428441" description="Uncharacterized ABC transporter permease MT2639">
    <location>
        <begin position="1"/>
        <end position="349"/>
    </location>
</feature>
<feature type="transmembrane region" description="Helical" evidence="1">
    <location>
        <begin position="17"/>
        <end position="37"/>
    </location>
</feature>
<feature type="transmembrane region" description="Helical" evidence="1">
    <location>
        <begin position="230"/>
        <end position="250"/>
    </location>
</feature>
<feature type="transmembrane region" description="Helical" evidence="1">
    <location>
        <begin position="284"/>
        <end position="304"/>
    </location>
</feature>
<feature type="transmembrane region" description="Helical" evidence="1">
    <location>
        <begin position="308"/>
        <end position="328"/>
    </location>
</feature>
<feature type="region of interest" description="Disordered" evidence="2">
    <location>
        <begin position="111"/>
        <end position="131"/>
    </location>
</feature>
<keyword id="KW-1003">Cell membrane</keyword>
<keyword id="KW-0472">Membrane</keyword>
<keyword id="KW-1185">Reference proteome</keyword>
<keyword id="KW-0812">Transmembrane</keyword>
<keyword id="KW-1133">Transmembrane helix</keyword>
<keyword id="KW-0813">Transport</keyword>
<accession>P9WG14</accession>
<accession>L0TBL1</accession>
<accession>P65007</accession>
<accession>Q50735</accession>
<protein>
    <recommendedName>
        <fullName>Uncharacterized ABC transporter permease MT2639</fullName>
    </recommendedName>
</protein>
<gene>
    <name type="ordered locus">MT2639</name>
</gene>